<comment type="function">
    <text evidence="1">DNA-binding protein that binds to both single- and double-stranded DNA. Binds preferentially to UV-damaged DNA. May be involved in DNA-metabolic processes.</text>
</comment>
<comment type="similarity">
    <text evidence="4">Belongs to the WD repeat DDB2/WDR76 family.</text>
</comment>
<protein>
    <recommendedName>
        <fullName evidence="1">DNA damage-binding protein CMR1</fullName>
    </recommendedName>
</protein>
<organism>
    <name type="scientific">Cryptococcus neoformans var. neoformans serotype D (strain B-3501A)</name>
    <name type="common">Filobasidiella neoformans</name>
    <dbReference type="NCBI Taxonomy" id="283643"/>
    <lineage>
        <taxon>Eukaryota</taxon>
        <taxon>Fungi</taxon>
        <taxon>Dikarya</taxon>
        <taxon>Basidiomycota</taxon>
        <taxon>Agaricomycotina</taxon>
        <taxon>Tremellomycetes</taxon>
        <taxon>Tremellales</taxon>
        <taxon>Cryptococcaceae</taxon>
        <taxon>Cryptococcus</taxon>
        <taxon>Cryptococcus neoformans species complex</taxon>
    </lineage>
</organism>
<proteinExistence type="inferred from homology"/>
<feature type="chain" id="PRO_0000410341" description="DNA damage-binding protein CMR1">
    <location>
        <begin position="1"/>
        <end position="595"/>
    </location>
</feature>
<feature type="repeat" description="WD 1" evidence="2">
    <location>
        <begin position="185"/>
        <end position="226"/>
    </location>
</feature>
<feature type="repeat" description="WD 2" evidence="2">
    <location>
        <begin position="255"/>
        <end position="297"/>
    </location>
</feature>
<feature type="repeat" description="WD 3" evidence="2">
    <location>
        <begin position="300"/>
        <end position="339"/>
    </location>
</feature>
<feature type="repeat" description="WD 4" evidence="2">
    <location>
        <begin position="349"/>
        <end position="389"/>
    </location>
</feature>
<feature type="repeat" description="WD 5" evidence="2">
    <location>
        <begin position="448"/>
        <end position="487"/>
    </location>
</feature>
<feature type="repeat" description="WD 6" evidence="2">
    <location>
        <begin position="519"/>
        <end position="556"/>
    </location>
</feature>
<feature type="repeat" description="WD 7" evidence="2">
    <location>
        <begin position="558"/>
        <end position="595"/>
    </location>
</feature>
<feature type="region of interest" description="Disordered" evidence="3">
    <location>
        <begin position="20"/>
        <end position="79"/>
    </location>
</feature>
<feature type="region of interest" description="Disordered" evidence="3">
    <location>
        <begin position="397"/>
        <end position="429"/>
    </location>
</feature>
<feature type="compositionally biased region" description="Low complexity" evidence="3">
    <location>
        <begin position="29"/>
        <end position="46"/>
    </location>
</feature>
<feature type="compositionally biased region" description="Basic residues" evidence="3">
    <location>
        <begin position="47"/>
        <end position="60"/>
    </location>
</feature>
<feature type="compositionally biased region" description="Low complexity" evidence="3">
    <location>
        <begin position="405"/>
        <end position="415"/>
    </location>
</feature>
<feature type="compositionally biased region" description="Basic and acidic residues" evidence="3">
    <location>
        <begin position="417"/>
        <end position="426"/>
    </location>
</feature>
<evidence type="ECO:0000250" key="1">
    <source>
        <dbReference type="UniProtKB" id="Q12510"/>
    </source>
</evidence>
<evidence type="ECO:0000255" key="2"/>
<evidence type="ECO:0000256" key="3">
    <source>
        <dbReference type="SAM" id="MobiDB-lite"/>
    </source>
</evidence>
<evidence type="ECO:0000305" key="4"/>
<accession>P0CS57</accession>
<accession>Q55MZ1</accession>
<accession>Q5KBC0</accession>
<sequence>MDEETAYELERQKTIAENRALLDSLGLDPAGASSPFGSSPAPTSNKTKPKPKPAPKKRKAAAVIAVDEGPRRRSGRIAGLEADGDAFKAKVEEEEKEREILRVVSRKEREKVMDVGKMVEDTPEDEIKDMEKYLQSIAELSNPRTYPAGTVSAREAYADSDTVPSEVQRLKDAFKDMSLKGNTKVTNERVFSMCVHPEKTKTLVLVGDKYGQLGIWDALGPPMEKPENEDDTSGLLRAEGEDEYQEGRVWRVQAHAKNSISCMKVDPVNGSGLFSTAYDCSLRHLSFSTLQSTELFSFQDEDLLINHFDLLPSAQEAWMVDKNGGISHWDTRESKRESGRRRWVVQEEGRGAKLGGVSVNPLMPHLICTAGNDQHVRIWDTRHLFSISSNLVPSAAAIEEEEEGTSTLSGQSSSLPHDTHPTRESDYSTVTSYLASPRGKGLMRAKWQHGKSCSSAYWDPWGRRILTTSYDDHLRVFNIDPGSSLVDDRAVGSLLQPNGFKPTKVVRHNCQTGRWLTILRAQWSLNMEYMPHFTVGNMKRTLDVVSATGEKIVGLWTDDVTAVPTVTASHPNIVDRVVGGNTSGRIQLWSSGDHI</sequence>
<keyword id="KW-0227">DNA damage</keyword>
<keyword id="KW-0238">DNA-binding</keyword>
<keyword id="KW-0677">Repeat</keyword>
<keyword id="KW-0853">WD repeat</keyword>
<gene>
    <name type="ordered locus">CNBH2930</name>
</gene>
<dbReference type="EMBL" id="AAEY01000042">
    <property type="protein sequence ID" value="EAL19194.1"/>
    <property type="molecule type" value="Genomic_DNA"/>
</dbReference>
<dbReference type="RefSeq" id="XP_773841.1">
    <property type="nucleotide sequence ID" value="XM_768748.1"/>
</dbReference>
<dbReference type="SMR" id="P0CS57"/>
<dbReference type="EnsemblFungi" id="AAW45607">
    <property type="protein sequence ID" value="AAW45607"/>
    <property type="gene ID" value="CNI03070"/>
</dbReference>
<dbReference type="GeneID" id="4937817"/>
<dbReference type="KEGG" id="cnb:CNBH2930"/>
<dbReference type="VEuPathDB" id="FungiDB:CNBH2930"/>
<dbReference type="HOGENOM" id="CLU_017019_1_0_1"/>
<dbReference type="OrthoDB" id="6735at5206"/>
<dbReference type="GO" id="GO:0005634">
    <property type="term" value="C:nucleus"/>
    <property type="evidence" value="ECO:0007669"/>
    <property type="project" value="TreeGrafter"/>
</dbReference>
<dbReference type="GO" id="GO:0003677">
    <property type="term" value="F:DNA binding"/>
    <property type="evidence" value="ECO:0007669"/>
    <property type="project" value="UniProtKB-KW"/>
</dbReference>
<dbReference type="GO" id="GO:0006974">
    <property type="term" value="P:DNA damage response"/>
    <property type="evidence" value="ECO:0007669"/>
    <property type="project" value="UniProtKB-KW"/>
</dbReference>
<dbReference type="GO" id="GO:2000001">
    <property type="term" value="P:regulation of DNA damage checkpoint"/>
    <property type="evidence" value="ECO:0007669"/>
    <property type="project" value="TreeGrafter"/>
</dbReference>
<dbReference type="FunFam" id="2.130.10.10:FF:001808">
    <property type="entry name" value="DNA damage-binding protein CMR1"/>
    <property type="match status" value="1"/>
</dbReference>
<dbReference type="Gene3D" id="2.130.10.10">
    <property type="entry name" value="YVTN repeat-like/Quinoprotein amine dehydrogenase"/>
    <property type="match status" value="2"/>
</dbReference>
<dbReference type="InterPro" id="IPR015943">
    <property type="entry name" value="WD40/YVTN_repeat-like_dom_sf"/>
</dbReference>
<dbReference type="InterPro" id="IPR019775">
    <property type="entry name" value="WD40_repeat_CS"/>
</dbReference>
<dbReference type="InterPro" id="IPR036322">
    <property type="entry name" value="WD40_repeat_dom_sf"/>
</dbReference>
<dbReference type="InterPro" id="IPR001680">
    <property type="entry name" value="WD40_rpt"/>
</dbReference>
<dbReference type="InterPro" id="IPR050853">
    <property type="entry name" value="WD_repeat_DNA-damage-binding"/>
</dbReference>
<dbReference type="PANTHER" id="PTHR14773">
    <property type="entry name" value="WD REPEAT-CONTAINING PROTEIN 76"/>
    <property type="match status" value="1"/>
</dbReference>
<dbReference type="PANTHER" id="PTHR14773:SF0">
    <property type="entry name" value="WD REPEAT-CONTAINING PROTEIN 76"/>
    <property type="match status" value="1"/>
</dbReference>
<dbReference type="SMART" id="SM00320">
    <property type="entry name" value="WD40"/>
    <property type="match status" value="4"/>
</dbReference>
<dbReference type="SUPFAM" id="SSF50978">
    <property type="entry name" value="WD40 repeat-like"/>
    <property type="match status" value="1"/>
</dbReference>
<dbReference type="PROSITE" id="PS00678">
    <property type="entry name" value="WD_REPEATS_1"/>
    <property type="match status" value="1"/>
</dbReference>
<reference key="1">
    <citation type="journal article" date="2005" name="Science">
        <title>The genome of the basidiomycetous yeast and human pathogen Cryptococcus neoformans.</title>
        <authorList>
            <person name="Loftus B.J."/>
            <person name="Fung E."/>
            <person name="Roncaglia P."/>
            <person name="Rowley D."/>
            <person name="Amedeo P."/>
            <person name="Bruno D."/>
            <person name="Vamathevan J."/>
            <person name="Miranda M."/>
            <person name="Anderson I.J."/>
            <person name="Fraser J.A."/>
            <person name="Allen J.E."/>
            <person name="Bosdet I.E."/>
            <person name="Brent M.R."/>
            <person name="Chiu R."/>
            <person name="Doering T.L."/>
            <person name="Donlin M.J."/>
            <person name="D'Souza C.A."/>
            <person name="Fox D.S."/>
            <person name="Grinberg V."/>
            <person name="Fu J."/>
            <person name="Fukushima M."/>
            <person name="Haas B.J."/>
            <person name="Huang J.C."/>
            <person name="Janbon G."/>
            <person name="Jones S.J.M."/>
            <person name="Koo H.L."/>
            <person name="Krzywinski M.I."/>
            <person name="Kwon-Chung K.J."/>
            <person name="Lengeler K.B."/>
            <person name="Maiti R."/>
            <person name="Marra M.A."/>
            <person name="Marra R.E."/>
            <person name="Mathewson C.A."/>
            <person name="Mitchell T.G."/>
            <person name="Pertea M."/>
            <person name="Riggs F.R."/>
            <person name="Salzberg S.L."/>
            <person name="Schein J.E."/>
            <person name="Shvartsbeyn A."/>
            <person name="Shin H."/>
            <person name="Shumway M."/>
            <person name="Specht C.A."/>
            <person name="Suh B.B."/>
            <person name="Tenney A."/>
            <person name="Utterback T.R."/>
            <person name="Wickes B.L."/>
            <person name="Wortman J.R."/>
            <person name="Wye N.H."/>
            <person name="Kronstad J.W."/>
            <person name="Lodge J.K."/>
            <person name="Heitman J."/>
            <person name="Davis R.W."/>
            <person name="Fraser C.M."/>
            <person name="Hyman R.W."/>
        </authorList>
    </citation>
    <scope>NUCLEOTIDE SEQUENCE [LARGE SCALE GENOMIC DNA]</scope>
    <source>
        <strain>B-3501A</strain>
    </source>
</reference>
<name>CMR1_CRYNB</name>